<reference key="1">
    <citation type="journal article" date="2006" name="J. Bacteriol.">
        <title>The genome sequence of the obligately chemolithoautotrophic, facultatively anaerobic bacterium Thiobacillus denitrificans.</title>
        <authorList>
            <person name="Beller H.R."/>
            <person name="Chain P.S."/>
            <person name="Letain T.E."/>
            <person name="Chakicherla A."/>
            <person name="Larimer F.W."/>
            <person name="Richardson P.M."/>
            <person name="Coleman M.A."/>
            <person name="Wood A.P."/>
            <person name="Kelly D.P."/>
        </authorList>
    </citation>
    <scope>NUCLEOTIDE SEQUENCE [LARGE SCALE GENOMIC DNA]</scope>
    <source>
        <strain>ATCC 25259 / T1</strain>
    </source>
</reference>
<evidence type="ECO:0000255" key="1">
    <source>
        <dbReference type="HAMAP-Rule" id="MF_00300"/>
    </source>
</evidence>
<organism>
    <name type="scientific">Thiobacillus denitrificans (strain ATCC 25259 / T1)</name>
    <dbReference type="NCBI Taxonomy" id="292415"/>
    <lineage>
        <taxon>Bacteria</taxon>
        <taxon>Pseudomonadati</taxon>
        <taxon>Pseudomonadota</taxon>
        <taxon>Betaproteobacteria</taxon>
        <taxon>Nitrosomonadales</taxon>
        <taxon>Thiobacillaceae</taxon>
        <taxon>Thiobacillus</taxon>
    </lineage>
</organism>
<name>AROC_THIDA</name>
<protein>
    <recommendedName>
        <fullName evidence="1">Chorismate synthase</fullName>
        <shortName evidence="1">CS</shortName>
        <ecNumber evidence="1">4.2.3.5</ecNumber>
    </recommendedName>
    <alternativeName>
        <fullName evidence="1">5-enolpyruvylshikimate-3-phosphate phospholyase</fullName>
    </alternativeName>
</protein>
<accession>Q3SL02</accession>
<gene>
    <name evidence="1" type="primary">aroC</name>
    <name type="ordered locus">Tbd_0666</name>
</gene>
<comment type="function">
    <text evidence="1">Catalyzes the anti-1,4-elimination of the C-3 phosphate and the C-6 proR hydrogen from 5-enolpyruvylshikimate-3-phosphate (EPSP) to yield chorismate, which is the branch point compound that serves as the starting substrate for the three terminal pathways of aromatic amino acid biosynthesis. This reaction introduces a second double bond into the aromatic ring system.</text>
</comment>
<comment type="catalytic activity">
    <reaction evidence="1">
        <text>5-O-(1-carboxyvinyl)-3-phosphoshikimate = chorismate + phosphate</text>
        <dbReference type="Rhea" id="RHEA:21020"/>
        <dbReference type="ChEBI" id="CHEBI:29748"/>
        <dbReference type="ChEBI" id="CHEBI:43474"/>
        <dbReference type="ChEBI" id="CHEBI:57701"/>
        <dbReference type="EC" id="4.2.3.5"/>
    </reaction>
</comment>
<comment type="cofactor">
    <cofactor evidence="1">
        <name>FMNH2</name>
        <dbReference type="ChEBI" id="CHEBI:57618"/>
    </cofactor>
    <text evidence="1">Reduced FMN (FMNH(2)).</text>
</comment>
<comment type="pathway">
    <text evidence="1">Metabolic intermediate biosynthesis; chorismate biosynthesis; chorismate from D-erythrose 4-phosphate and phosphoenolpyruvate: step 7/7.</text>
</comment>
<comment type="subunit">
    <text evidence="1">Homotetramer.</text>
</comment>
<comment type="similarity">
    <text evidence="1">Belongs to the chorismate synthase family.</text>
</comment>
<dbReference type="EC" id="4.2.3.5" evidence="1"/>
<dbReference type="EMBL" id="CP000116">
    <property type="protein sequence ID" value="AAZ96619.1"/>
    <property type="molecule type" value="Genomic_DNA"/>
</dbReference>
<dbReference type="RefSeq" id="WP_011311178.1">
    <property type="nucleotide sequence ID" value="NC_007404.1"/>
</dbReference>
<dbReference type="SMR" id="Q3SL02"/>
<dbReference type="STRING" id="292415.Tbd_0666"/>
<dbReference type="KEGG" id="tbd:Tbd_0666"/>
<dbReference type="eggNOG" id="COG0082">
    <property type="taxonomic scope" value="Bacteria"/>
</dbReference>
<dbReference type="HOGENOM" id="CLU_034547_0_2_4"/>
<dbReference type="OrthoDB" id="9771806at2"/>
<dbReference type="UniPathway" id="UPA00053">
    <property type="reaction ID" value="UER00090"/>
</dbReference>
<dbReference type="Proteomes" id="UP000008291">
    <property type="component" value="Chromosome"/>
</dbReference>
<dbReference type="GO" id="GO:0005829">
    <property type="term" value="C:cytosol"/>
    <property type="evidence" value="ECO:0007669"/>
    <property type="project" value="TreeGrafter"/>
</dbReference>
<dbReference type="GO" id="GO:0004107">
    <property type="term" value="F:chorismate synthase activity"/>
    <property type="evidence" value="ECO:0007669"/>
    <property type="project" value="UniProtKB-UniRule"/>
</dbReference>
<dbReference type="GO" id="GO:0010181">
    <property type="term" value="F:FMN binding"/>
    <property type="evidence" value="ECO:0007669"/>
    <property type="project" value="TreeGrafter"/>
</dbReference>
<dbReference type="GO" id="GO:0008652">
    <property type="term" value="P:amino acid biosynthetic process"/>
    <property type="evidence" value="ECO:0007669"/>
    <property type="project" value="UniProtKB-KW"/>
</dbReference>
<dbReference type="GO" id="GO:0009073">
    <property type="term" value="P:aromatic amino acid family biosynthetic process"/>
    <property type="evidence" value="ECO:0007669"/>
    <property type="project" value="UniProtKB-KW"/>
</dbReference>
<dbReference type="GO" id="GO:0009423">
    <property type="term" value="P:chorismate biosynthetic process"/>
    <property type="evidence" value="ECO:0007669"/>
    <property type="project" value="UniProtKB-UniRule"/>
</dbReference>
<dbReference type="CDD" id="cd07304">
    <property type="entry name" value="Chorismate_synthase"/>
    <property type="match status" value="1"/>
</dbReference>
<dbReference type="FunFam" id="3.60.150.10:FF:000001">
    <property type="entry name" value="Chorismate synthase"/>
    <property type="match status" value="1"/>
</dbReference>
<dbReference type="Gene3D" id="3.60.150.10">
    <property type="entry name" value="Chorismate synthase AroC"/>
    <property type="match status" value="1"/>
</dbReference>
<dbReference type="HAMAP" id="MF_00300">
    <property type="entry name" value="Chorismate_synth"/>
    <property type="match status" value="1"/>
</dbReference>
<dbReference type="InterPro" id="IPR000453">
    <property type="entry name" value="Chorismate_synth"/>
</dbReference>
<dbReference type="InterPro" id="IPR035904">
    <property type="entry name" value="Chorismate_synth_AroC_sf"/>
</dbReference>
<dbReference type="InterPro" id="IPR020541">
    <property type="entry name" value="Chorismate_synthase_CS"/>
</dbReference>
<dbReference type="NCBIfam" id="TIGR00033">
    <property type="entry name" value="aroC"/>
    <property type="match status" value="1"/>
</dbReference>
<dbReference type="NCBIfam" id="NF003793">
    <property type="entry name" value="PRK05382.1"/>
    <property type="match status" value="1"/>
</dbReference>
<dbReference type="PANTHER" id="PTHR21085">
    <property type="entry name" value="CHORISMATE SYNTHASE"/>
    <property type="match status" value="1"/>
</dbReference>
<dbReference type="PANTHER" id="PTHR21085:SF0">
    <property type="entry name" value="CHORISMATE SYNTHASE"/>
    <property type="match status" value="1"/>
</dbReference>
<dbReference type="Pfam" id="PF01264">
    <property type="entry name" value="Chorismate_synt"/>
    <property type="match status" value="1"/>
</dbReference>
<dbReference type="PIRSF" id="PIRSF001456">
    <property type="entry name" value="Chorismate_synth"/>
    <property type="match status" value="1"/>
</dbReference>
<dbReference type="SUPFAM" id="SSF103263">
    <property type="entry name" value="Chorismate synthase, AroC"/>
    <property type="match status" value="1"/>
</dbReference>
<dbReference type="PROSITE" id="PS00787">
    <property type="entry name" value="CHORISMATE_SYNTHASE_1"/>
    <property type="match status" value="1"/>
</dbReference>
<dbReference type="PROSITE" id="PS00788">
    <property type="entry name" value="CHORISMATE_SYNTHASE_2"/>
    <property type="match status" value="1"/>
</dbReference>
<dbReference type="PROSITE" id="PS00789">
    <property type="entry name" value="CHORISMATE_SYNTHASE_3"/>
    <property type="match status" value="1"/>
</dbReference>
<feature type="chain" id="PRO_0000256358" description="Chorismate synthase">
    <location>
        <begin position="1"/>
        <end position="366"/>
    </location>
</feature>
<feature type="binding site" evidence="1">
    <location>
        <position position="48"/>
    </location>
    <ligand>
        <name>NADP(+)</name>
        <dbReference type="ChEBI" id="CHEBI:58349"/>
    </ligand>
</feature>
<feature type="binding site" evidence="1">
    <location>
        <position position="54"/>
    </location>
    <ligand>
        <name>NADP(+)</name>
        <dbReference type="ChEBI" id="CHEBI:58349"/>
    </ligand>
</feature>
<feature type="binding site" evidence="1">
    <location>
        <begin position="125"/>
        <end position="127"/>
    </location>
    <ligand>
        <name>FMN</name>
        <dbReference type="ChEBI" id="CHEBI:58210"/>
    </ligand>
</feature>
<feature type="binding site" evidence="1">
    <location>
        <begin position="238"/>
        <end position="239"/>
    </location>
    <ligand>
        <name>FMN</name>
        <dbReference type="ChEBI" id="CHEBI:58210"/>
    </ligand>
</feature>
<feature type="binding site" evidence="1">
    <location>
        <position position="278"/>
    </location>
    <ligand>
        <name>FMN</name>
        <dbReference type="ChEBI" id="CHEBI:58210"/>
    </ligand>
</feature>
<feature type="binding site" evidence="1">
    <location>
        <begin position="293"/>
        <end position="297"/>
    </location>
    <ligand>
        <name>FMN</name>
        <dbReference type="ChEBI" id="CHEBI:58210"/>
    </ligand>
</feature>
<feature type="binding site" evidence="1">
    <location>
        <position position="319"/>
    </location>
    <ligand>
        <name>FMN</name>
        <dbReference type="ChEBI" id="CHEBI:58210"/>
    </ligand>
</feature>
<keyword id="KW-0028">Amino-acid biosynthesis</keyword>
<keyword id="KW-0057">Aromatic amino acid biosynthesis</keyword>
<keyword id="KW-0274">FAD</keyword>
<keyword id="KW-0285">Flavoprotein</keyword>
<keyword id="KW-0288">FMN</keyword>
<keyword id="KW-0456">Lyase</keyword>
<keyword id="KW-0521">NADP</keyword>
<keyword id="KW-1185">Reference proteome</keyword>
<proteinExistence type="inferred from homology"/>
<sequence length="366" mass="38918">MSGSTLGKLFCVTVFGESHGPAIGCVVDGCPPGMTLGESDIQHDLDRRKPGTSRHVTQRRESDTAEILSGVYEGRTTGTPIALLIRNEDQRSKDYGNIAATFRPGHADYTYTQKYGFRDPRGGGRSSARLTAPIVGAGAIAKKWLKEKYGIVIRGYMSALGPLDIPFESWDEVDNNAFFSPNAAIVPELEQYMDALRKSGDSVGARVSVVAENVPPGWGEPLYDKLDADLAHALMGLNAVKGVEIGDGMQAARQLGTEHRDEITPAGFLSNHAGGVLGGISSGQAIVAHVAIKPTSSMRLPGRSVDLDGQPIEVVTHGRHDPCVGIRATPIVEALTAIVLMDHALRHRAQCGDVASGVPIVPARLD</sequence>